<evidence type="ECO:0000255" key="1">
    <source>
        <dbReference type="HAMAP-Rule" id="MF_00740"/>
    </source>
</evidence>
<proteinExistence type="inferred from homology"/>
<name>DEOB_ECOL5</name>
<feature type="chain" id="PRO_0000258285" description="Phosphopentomutase">
    <location>
        <begin position="1"/>
        <end position="407"/>
    </location>
</feature>
<feature type="binding site" evidence="1">
    <location>
        <position position="10"/>
    </location>
    <ligand>
        <name>Mn(2+)</name>
        <dbReference type="ChEBI" id="CHEBI:29035"/>
        <label>1</label>
    </ligand>
</feature>
<feature type="binding site" evidence="1">
    <location>
        <position position="306"/>
    </location>
    <ligand>
        <name>Mn(2+)</name>
        <dbReference type="ChEBI" id="CHEBI:29035"/>
        <label>2</label>
    </ligand>
</feature>
<feature type="binding site" evidence="1">
    <location>
        <position position="311"/>
    </location>
    <ligand>
        <name>Mn(2+)</name>
        <dbReference type="ChEBI" id="CHEBI:29035"/>
        <label>2</label>
    </ligand>
</feature>
<feature type="binding site" evidence="1">
    <location>
        <position position="347"/>
    </location>
    <ligand>
        <name>Mn(2+)</name>
        <dbReference type="ChEBI" id="CHEBI:29035"/>
        <label>1</label>
    </ligand>
</feature>
<feature type="binding site" evidence="1">
    <location>
        <position position="348"/>
    </location>
    <ligand>
        <name>Mn(2+)</name>
        <dbReference type="ChEBI" id="CHEBI:29035"/>
        <label>1</label>
    </ligand>
</feature>
<feature type="binding site" evidence="1">
    <location>
        <position position="359"/>
    </location>
    <ligand>
        <name>Mn(2+)</name>
        <dbReference type="ChEBI" id="CHEBI:29035"/>
        <label>2</label>
    </ligand>
</feature>
<protein>
    <recommendedName>
        <fullName evidence="1">Phosphopentomutase</fullName>
        <ecNumber evidence="1">5.4.2.7</ecNumber>
    </recommendedName>
    <alternativeName>
        <fullName evidence="1">Phosphodeoxyribomutase</fullName>
    </alternativeName>
</protein>
<accession>Q0T8T0</accession>
<dbReference type="EC" id="5.4.2.7" evidence="1"/>
<dbReference type="EMBL" id="CP000247">
    <property type="protein sequence ID" value="ABG72649.1"/>
    <property type="molecule type" value="Genomic_DNA"/>
</dbReference>
<dbReference type="RefSeq" id="WP_000816460.1">
    <property type="nucleotide sequence ID" value="NC_008253.1"/>
</dbReference>
<dbReference type="SMR" id="Q0T8T0"/>
<dbReference type="GeneID" id="86944918"/>
<dbReference type="KEGG" id="ecp:ECP_4767"/>
<dbReference type="HOGENOM" id="CLU_053861_0_0_6"/>
<dbReference type="UniPathway" id="UPA00002">
    <property type="reaction ID" value="UER00467"/>
</dbReference>
<dbReference type="Proteomes" id="UP000009182">
    <property type="component" value="Chromosome"/>
</dbReference>
<dbReference type="GO" id="GO:0005829">
    <property type="term" value="C:cytosol"/>
    <property type="evidence" value="ECO:0007669"/>
    <property type="project" value="TreeGrafter"/>
</dbReference>
<dbReference type="GO" id="GO:0000287">
    <property type="term" value="F:magnesium ion binding"/>
    <property type="evidence" value="ECO:0007669"/>
    <property type="project" value="InterPro"/>
</dbReference>
<dbReference type="GO" id="GO:0030145">
    <property type="term" value="F:manganese ion binding"/>
    <property type="evidence" value="ECO:0007669"/>
    <property type="project" value="UniProtKB-UniRule"/>
</dbReference>
<dbReference type="GO" id="GO:0008973">
    <property type="term" value="F:phosphopentomutase activity"/>
    <property type="evidence" value="ECO:0007669"/>
    <property type="project" value="UniProtKB-UniRule"/>
</dbReference>
<dbReference type="GO" id="GO:0006018">
    <property type="term" value="P:2-deoxyribose 1-phosphate catabolic process"/>
    <property type="evidence" value="ECO:0007669"/>
    <property type="project" value="UniProtKB-UniRule"/>
</dbReference>
<dbReference type="GO" id="GO:0006015">
    <property type="term" value="P:5-phosphoribose 1-diphosphate biosynthetic process"/>
    <property type="evidence" value="ECO:0007669"/>
    <property type="project" value="UniProtKB-UniPathway"/>
</dbReference>
<dbReference type="GO" id="GO:0043094">
    <property type="term" value="P:metabolic compound salvage"/>
    <property type="evidence" value="ECO:0007669"/>
    <property type="project" value="InterPro"/>
</dbReference>
<dbReference type="GO" id="GO:0009117">
    <property type="term" value="P:nucleotide metabolic process"/>
    <property type="evidence" value="ECO:0007669"/>
    <property type="project" value="InterPro"/>
</dbReference>
<dbReference type="CDD" id="cd16009">
    <property type="entry name" value="PPM"/>
    <property type="match status" value="1"/>
</dbReference>
<dbReference type="FunFam" id="3.30.70.1250:FF:000001">
    <property type="entry name" value="Phosphopentomutase"/>
    <property type="match status" value="1"/>
</dbReference>
<dbReference type="Gene3D" id="3.40.720.10">
    <property type="entry name" value="Alkaline Phosphatase, subunit A"/>
    <property type="match status" value="1"/>
</dbReference>
<dbReference type="Gene3D" id="3.30.70.1250">
    <property type="entry name" value="Phosphopentomutase"/>
    <property type="match status" value="1"/>
</dbReference>
<dbReference type="HAMAP" id="MF_00740">
    <property type="entry name" value="Phosphopentomut"/>
    <property type="match status" value="1"/>
</dbReference>
<dbReference type="InterPro" id="IPR017850">
    <property type="entry name" value="Alkaline_phosphatase_core_sf"/>
</dbReference>
<dbReference type="InterPro" id="IPR010045">
    <property type="entry name" value="DeoB"/>
</dbReference>
<dbReference type="InterPro" id="IPR006124">
    <property type="entry name" value="Metalloenzyme"/>
</dbReference>
<dbReference type="InterPro" id="IPR024052">
    <property type="entry name" value="Phosphopentomutase_DeoB_cap_sf"/>
</dbReference>
<dbReference type="NCBIfam" id="TIGR01696">
    <property type="entry name" value="deoB"/>
    <property type="match status" value="1"/>
</dbReference>
<dbReference type="NCBIfam" id="NF003766">
    <property type="entry name" value="PRK05362.1"/>
    <property type="match status" value="1"/>
</dbReference>
<dbReference type="PANTHER" id="PTHR21110">
    <property type="entry name" value="PHOSPHOPENTOMUTASE"/>
    <property type="match status" value="1"/>
</dbReference>
<dbReference type="PANTHER" id="PTHR21110:SF0">
    <property type="entry name" value="PHOSPHOPENTOMUTASE"/>
    <property type="match status" value="1"/>
</dbReference>
<dbReference type="Pfam" id="PF01676">
    <property type="entry name" value="Metalloenzyme"/>
    <property type="match status" value="1"/>
</dbReference>
<dbReference type="PIRSF" id="PIRSF001491">
    <property type="entry name" value="Ppentomutase"/>
    <property type="match status" value="1"/>
</dbReference>
<dbReference type="SUPFAM" id="SSF53649">
    <property type="entry name" value="Alkaline phosphatase-like"/>
    <property type="match status" value="1"/>
</dbReference>
<dbReference type="SUPFAM" id="SSF143856">
    <property type="entry name" value="DeoB insert domain-like"/>
    <property type="match status" value="1"/>
</dbReference>
<keyword id="KW-0963">Cytoplasm</keyword>
<keyword id="KW-0413">Isomerase</keyword>
<keyword id="KW-0464">Manganese</keyword>
<keyword id="KW-0479">Metal-binding</keyword>
<comment type="function">
    <text evidence="1">Isomerase that catalyzes the conversion of deoxy-ribose 1-phosphate (dRib-1-P) and ribose 1-phosphate (Rib-1-P) to deoxy-ribose 5-phosphate (dRib-5-P) and ribose 5-phosphate (Rib-5-P), respectively.</text>
</comment>
<comment type="catalytic activity">
    <reaction evidence="1">
        <text>2-deoxy-alpha-D-ribose 1-phosphate = 2-deoxy-D-ribose 5-phosphate</text>
        <dbReference type="Rhea" id="RHEA:27658"/>
        <dbReference type="ChEBI" id="CHEBI:57259"/>
        <dbReference type="ChEBI" id="CHEBI:62877"/>
        <dbReference type="EC" id="5.4.2.7"/>
    </reaction>
</comment>
<comment type="catalytic activity">
    <reaction evidence="1">
        <text>alpha-D-ribose 1-phosphate = D-ribose 5-phosphate</text>
        <dbReference type="Rhea" id="RHEA:18793"/>
        <dbReference type="ChEBI" id="CHEBI:57720"/>
        <dbReference type="ChEBI" id="CHEBI:78346"/>
        <dbReference type="EC" id="5.4.2.7"/>
    </reaction>
</comment>
<comment type="cofactor">
    <cofactor evidence="1">
        <name>Mn(2+)</name>
        <dbReference type="ChEBI" id="CHEBI:29035"/>
    </cofactor>
    <text evidence="1">Binds 2 manganese ions.</text>
</comment>
<comment type="pathway">
    <text evidence="1">Carbohydrate degradation; 2-deoxy-D-ribose 1-phosphate degradation; D-glyceraldehyde 3-phosphate and acetaldehyde from 2-deoxy-alpha-D-ribose 1-phosphate: step 1/2.</text>
</comment>
<comment type="subcellular location">
    <subcellularLocation>
        <location evidence="1">Cytoplasm</location>
    </subcellularLocation>
</comment>
<comment type="similarity">
    <text evidence="1">Belongs to the phosphopentomutase family.</text>
</comment>
<organism>
    <name type="scientific">Escherichia coli O6:K15:H31 (strain 536 / UPEC)</name>
    <dbReference type="NCBI Taxonomy" id="362663"/>
    <lineage>
        <taxon>Bacteria</taxon>
        <taxon>Pseudomonadati</taxon>
        <taxon>Pseudomonadota</taxon>
        <taxon>Gammaproteobacteria</taxon>
        <taxon>Enterobacterales</taxon>
        <taxon>Enterobacteriaceae</taxon>
        <taxon>Escherichia</taxon>
    </lineage>
</organism>
<sequence>MKRAFIMVLDSFGIGATEDAERFGDVGADTLGHIAEACAKGEADHGRKGPLNLPNLTRLGLAKAHEGSTGFIPAGMDGNAEVIGAYAWAHEMSSGKDTPSGHWEIAGVPVLFEWGYFSDHENSFPQELLDKLVERANLPGYLGNCHSSGTVILDQLGEEHMKTGKPIFYTSADSVFQIACHEETFGLDKLYELCEIAREELTNGGYNIGRVIARPFIGDKAGNFQRTGNRHDLAVEPPAPTVLQKLVDEKHGQVVSVGKIADIYANCGITKKVKATGLDALFDATIKEMKEAGDNTIVFTNFVDFDSSWGHRRDVAGYAAGLELFDRRLPELMSLLRDDDILILTADHGCDPTWTGTDHTREHIPVLVYGPKVKPGSLGHRETFADIGQTLAKYFGTSDMEYGKAMF</sequence>
<gene>
    <name evidence="1" type="primary">deoB</name>
    <name type="ordered locus">ECP_4767</name>
</gene>
<reference key="1">
    <citation type="journal article" date="2006" name="Mol. Microbiol.">
        <title>Role of pathogenicity island-associated integrases in the genome plasticity of uropathogenic Escherichia coli strain 536.</title>
        <authorList>
            <person name="Hochhut B."/>
            <person name="Wilde C."/>
            <person name="Balling G."/>
            <person name="Middendorf B."/>
            <person name="Dobrindt U."/>
            <person name="Brzuszkiewicz E."/>
            <person name="Gottschalk G."/>
            <person name="Carniel E."/>
            <person name="Hacker J."/>
        </authorList>
    </citation>
    <scope>NUCLEOTIDE SEQUENCE [LARGE SCALE GENOMIC DNA]</scope>
    <source>
        <strain>536 / UPEC</strain>
    </source>
</reference>